<organism>
    <name type="scientific">Shigella boydii serotype 4 (strain Sb227)</name>
    <dbReference type="NCBI Taxonomy" id="300268"/>
    <lineage>
        <taxon>Bacteria</taxon>
        <taxon>Pseudomonadati</taxon>
        <taxon>Pseudomonadota</taxon>
        <taxon>Gammaproteobacteria</taxon>
        <taxon>Enterobacterales</taxon>
        <taxon>Enterobacteriaceae</taxon>
        <taxon>Shigella</taxon>
    </lineage>
</organism>
<name>CITD_SHIBS</name>
<protein>
    <recommendedName>
        <fullName evidence="1">Citrate lyase acyl carrier protein</fullName>
    </recommendedName>
    <alternativeName>
        <fullName evidence="1">Citrate lyase gamma chain</fullName>
    </alternativeName>
</protein>
<reference key="1">
    <citation type="journal article" date="2005" name="Nucleic Acids Res.">
        <title>Genome dynamics and diversity of Shigella species, the etiologic agents of bacillary dysentery.</title>
        <authorList>
            <person name="Yang F."/>
            <person name="Yang J."/>
            <person name="Zhang X."/>
            <person name="Chen L."/>
            <person name="Jiang Y."/>
            <person name="Yan Y."/>
            <person name="Tang X."/>
            <person name="Wang J."/>
            <person name="Xiong Z."/>
            <person name="Dong J."/>
            <person name="Xue Y."/>
            <person name="Zhu Y."/>
            <person name="Xu X."/>
            <person name="Sun L."/>
            <person name="Chen S."/>
            <person name="Nie H."/>
            <person name="Peng J."/>
            <person name="Xu J."/>
            <person name="Wang Y."/>
            <person name="Yuan Z."/>
            <person name="Wen Y."/>
            <person name="Yao Z."/>
            <person name="Shen Y."/>
            <person name="Qiang B."/>
            <person name="Hou Y."/>
            <person name="Yu J."/>
            <person name="Jin Q."/>
        </authorList>
    </citation>
    <scope>NUCLEOTIDE SEQUENCE [LARGE SCALE GENOMIC DNA]</scope>
    <source>
        <strain>Sb227</strain>
    </source>
</reference>
<comment type="function">
    <text evidence="1">Covalent carrier of the coenzyme of citrate lyase.</text>
</comment>
<comment type="subunit">
    <text evidence="1">Oligomer with a subunit composition of (alpha,beta,gamma)6.</text>
</comment>
<comment type="subcellular location">
    <subcellularLocation>
        <location evidence="1">Cytoplasm</location>
    </subcellularLocation>
</comment>
<comment type="similarity">
    <text evidence="1">Belongs to the CitD family.</text>
</comment>
<gene>
    <name evidence="1" type="primary">citD</name>
    <name type="ordered locus">SBO_0482</name>
</gene>
<sequence>MKINQPAVAGTLESGDVMIRIAPLDTQDIDLQINSSVEKQFGDAIRTTILDVLARYNVRGVQLNVDDKGTLDCILRARLEALLARASGIPTLPWEDCQ</sequence>
<proteinExistence type="inferred from homology"/>
<keyword id="KW-0963">Cytoplasm</keyword>
<keyword id="KW-0597">Phosphoprotein</keyword>
<evidence type="ECO:0000255" key="1">
    <source>
        <dbReference type="HAMAP-Rule" id="MF_00805"/>
    </source>
</evidence>
<feature type="chain" id="PRO_1000047079" description="Citrate lyase acyl carrier protein">
    <location>
        <begin position="1"/>
        <end position="98"/>
    </location>
</feature>
<feature type="modified residue" description="O-(phosphoribosyl dephospho-coenzyme A)serine" evidence="1">
    <location>
        <position position="14"/>
    </location>
</feature>
<dbReference type="EMBL" id="CP000036">
    <property type="protein sequence ID" value="ABB65184.1"/>
    <property type="molecule type" value="Genomic_DNA"/>
</dbReference>
<dbReference type="RefSeq" id="WP_000700705.1">
    <property type="nucleotide sequence ID" value="NC_007613.1"/>
</dbReference>
<dbReference type="SMR" id="Q324S4"/>
<dbReference type="KEGG" id="sbo:SBO_0482"/>
<dbReference type="HOGENOM" id="CLU_158489_0_0_6"/>
<dbReference type="Proteomes" id="UP000007067">
    <property type="component" value="Chromosome"/>
</dbReference>
<dbReference type="GO" id="GO:0005737">
    <property type="term" value="C:cytoplasm"/>
    <property type="evidence" value="ECO:0007669"/>
    <property type="project" value="UniProtKB-SubCell"/>
</dbReference>
<dbReference type="HAMAP" id="MF_00805">
    <property type="entry name" value="CitD"/>
    <property type="match status" value="1"/>
</dbReference>
<dbReference type="InterPro" id="IPR006495">
    <property type="entry name" value="CitD"/>
</dbReference>
<dbReference type="InterPro" id="IPR023439">
    <property type="entry name" value="Mal_deCO2ase/Cit_lyase_ACP"/>
</dbReference>
<dbReference type="NCBIfam" id="TIGR01608">
    <property type="entry name" value="citD"/>
    <property type="match status" value="1"/>
</dbReference>
<dbReference type="NCBIfam" id="NF009726">
    <property type="entry name" value="PRK13253.1"/>
    <property type="match status" value="1"/>
</dbReference>
<dbReference type="Pfam" id="PF06857">
    <property type="entry name" value="ACP"/>
    <property type="match status" value="1"/>
</dbReference>
<dbReference type="PIRSF" id="PIRSF002736">
    <property type="entry name" value="Citrt_lyas_gamma"/>
    <property type="match status" value="1"/>
</dbReference>
<accession>Q324S4</accession>